<sequence length="798" mass="88968">MSQKQSTNQNQNGTHQPQPVKNQRTNNAAGANSGQQPQQQSQGQSQQQGRSNGPFSASDLNRIVLEYLNKKGYHRTEAMLRAESGRTLTPQNKQSPANTKTGKFPEQSSIPPNPGKTAKPISNPTNLSSKRDAEGGIVSSGRLEGLNAPENYIRAYSMLKNWVDSSLEIYKPELSYIMYPIFIYLFLNLVAKNPVYARRFFDRFSPDFKDFHGSEINRLFSVNSIDHIKENEVASAFQSHKYRITMSKTTLNLLLYFLNENESIGGSLIISVINQHLDPNIVESVTAREKLADGIKVLSDSENGNGKQNLEMNSVPVKLGPFPKDEEFVKEIETELKIKDDQEKQLNQQTAGDNYSGANNRTLLQEYKAMNNEKFKDNTGDDDKDKIKDKIAKDEEKKESELKVDGEKKDSNLSSPARDILPLPPKTALDLKLEIQKVKESRDAIKLDNLQLALPSVCMYTFQNTNKDMSCLDFSDDCRIAAAGFQDSYIKIWSLDGSSLNNPNIALNNNDKDEDPTCKTLVGHSGTVYSTSFSPDNKYLLSGSEDKTVRLWSMDTHTALVSYKGHNHPVWDVSFSPLGHYFATASHDQTARLWSCDHIYPLRIFAGHLNDVDCVSFHPNGCYVFTGSSDKTCRMWDVSTGDSVRLFLGHTAPVISIAVCPDGRWLSTGSEDGIINVWDIGTGKRLKQMRGHGKNAIYSLSYSKEGNVLISGGADHTVRVWDLKKATTEPSAEPDEPFIGYLGDVTASINQDIKEYGRRRTVIPTSDLVASFYTKKTPVFKVKFSRSNLALAGGAFRP</sequence>
<dbReference type="EMBL" id="Z21487">
    <property type="protein sequence ID" value="CAA79685.1"/>
    <property type="molecule type" value="Genomic_DNA"/>
</dbReference>
<dbReference type="EMBL" id="Z36067">
    <property type="protein sequence ID" value="CAA85160.1"/>
    <property type="molecule type" value="Genomic_DNA"/>
</dbReference>
<dbReference type="EMBL" id="AY692890">
    <property type="protein sequence ID" value="AAT92909.1"/>
    <property type="molecule type" value="Genomic_DNA"/>
</dbReference>
<dbReference type="EMBL" id="BK006936">
    <property type="protein sequence ID" value="DAA07314.1"/>
    <property type="molecule type" value="Genomic_DNA"/>
</dbReference>
<dbReference type="PIR" id="S34023">
    <property type="entry name" value="S34023"/>
</dbReference>
<dbReference type="RefSeq" id="NP_009757.1">
    <property type="nucleotide sequence ID" value="NM_001178546.1"/>
</dbReference>
<dbReference type="PDB" id="2J49">
    <property type="method" value="X-ray"/>
    <property type="resolution" value="2.30 A"/>
    <property type="chains" value="A=147-290"/>
</dbReference>
<dbReference type="PDB" id="6T9I">
    <property type="method" value="EM"/>
    <property type="resolution" value="3.90 A"/>
    <property type="chains" value="D=1-798"/>
</dbReference>
<dbReference type="PDB" id="6T9K">
    <property type="method" value="EM"/>
    <property type="resolution" value="3.30 A"/>
    <property type="chains" value="D=1-798"/>
</dbReference>
<dbReference type="PDBsum" id="2J49"/>
<dbReference type="PDBsum" id="6T9I"/>
<dbReference type="PDBsum" id="6T9K"/>
<dbReference type="EMDB" id="EMD-10412"/>
<dbReference type="EMDB" id="EMD-10414"/>
<dbReference type="SMR" id="P38129"/>
<dbReference type="BioGRID" id="32895">
    <property type="interactions" value="874"/>
</dbReference>
<dbReference type="ComplexPortal" id="CPX-1642">
    <property type="entry name" value="General transcription factor complex TFIID"/>
</dbReference>
<dbReference type="ComplexPortal" id="CPX-656">
    <property type="entry name" value="SAGA complex"/>
</dbReference>
<dbReference type="ComplexPortal" id="CPX-675">
    <property type="entry name" value="SLIK (SAGA-like) complex"/>
</dbReference>
<dbReference type="DIP" id="DIP-740N"/>
<dbReference type="FunCoup" id="P38129">
    <property type="interactions" value="1069"/>
</dbReference>
<dbReference type="IntAct" id="P38129">
    <property type="interactions" value="215"/>
</dbReference>
<dbReference type="MINT" id="P38129"/>
<dbReference type="STRING" id="4932.YBR198C"/>
<dbReference type="GlyGen" id="P38129">
    <property type="glycosylation" value="1 site, 1 O-linked glycan (1 site)"/>
</dbReference>
<dbReference type="iPTMnet" id="P38129"/>
<dbReference type="PaxDb" id="4932-YBR198C"/>
<dbReference type="PeptideAtlas" id="P38129"/>
<dbReference type="EnsemblFungi" id="YBR198C_mRNA">
    <property type="protein sequence ID" value="YBR198C"/>
    <property type="gene ID" value="YBR198C"/>
</dbReference>
<dbReference type="GeneID" id="852497"/>
<dbReference type="KEGG" id="sce:YBR198C"/>
<dbReference type="AGR" id="SGD:S000000402"/>
<dbReference type="SGD" id="S000000402">
    <property type="gene designation" value="TAF5"/>
</dbReference>
<dbReference type="VEuPathDB" id="FungiDB:YBR198C"/>
<dbReference type="eggNOG" id="KOG0263">
    <property type="taxonomic scope" value="Eukaryota"/>
</dbReference>
<dbReference type="GeneTree" id="ENSGT00940000153342"/>
<dbReference type="HOGENOM" id="CLU_005884_2_1_1"/>
<dbReference type="InParanoid" id="P38129"/>
<dbReference type="OMA" id="HNHPVWD"/>
<dbReference type="OrthoDB" id="10266330at2759"/>
<dbReference type="BioCyc" id="YEAST:G3O-29139-MONOMER"/>
<dbReference type="Reactome" id="R-SCE-674695">
    <property type="pathway name" value="RNA Polymerase II Pre-transcription Events"/>
</dbReference>
<dbReference type="Reactome" id="R-SCE-6807505">
    <property type="pathway name" value="RNA polymerase II transcribes snRNA genes"/>
</dbReference>
<dbReference type="Reactome" id="R-SCE-73776">
    <property type="pathway name" value="RNA Polymerase II Promoter Escape"/>
</dbReference>
<dbReference type="Reactome" id="R-SCE-73779">
    <property type="pathway name" value="RNA Polymerase II Transcription Pre-Initiation And Promoter Opening"/>
</dbReference>
<dbReference type="Reactome" id="R-SCE-75953">
    <property type="pathway name" value="RNA Polymerase II Transcription Initiation"/>
</dbReference>
<dbReference type="Reactome" id="R-SCE-76042">
    <property type="pathway name" value="RNA Polymerase II Transcription Initiation And Promoter Clearance"/>
</dbReference>
<dbReference type="BioGRID-ORCS" id="852497">
    <property type="hits" value="0 hits in 10 CRISPR screens"/>
</dbReference>
<dbReference type="EvolutionaryTrace" id="P38129"/>
<dbReference type="PRO" id="PR:P38129"/>
<dbReference type="Proteomes" id="UP000002311">
    <property type="component" value="Chromosome II"/>
</dbReference>
<dbReference type="RNAct" id="P38129">
    <property type="molecule type" value="protein"/>
</dbReference>
<dbReference type="GO" id="GO:0005634">
    <property type="term" value="C:nucleus"/>
    <property type="evidence" value="ECO:0000303"/>
    <property type="project" value="ComplexPortal"/>
</dbReference>
<dbReference type="GO" id="GO:0000124">
    <property type="term" value="C:SAGA complex"/>
    <property type="evidence" value="ECO:0000314"/>
    <property type="project" value="SGD"/>
</dbReference>
<dbReference type="GO" id="GO:0046695">
    <property type="term" value="C:SLIK (SAGA-like) complex"/>
    <property type="evidence" value="ECO:0000314"/>
    <property type="project" value="SGD"/>
</dbReference>
<dbReference type="GO" id="GO:0005669">
    <property type="term" value="C:transcription factor TFIID complex"/>
    <property type="evidence" value="ECO:0000314"/>
    <property type="project" value="SGD"/>
</dbReference>
<dbReference type="GO" id="GO:0003682">
    <property type="term" value="F:chromatin binding"/>
    <property type="evidence" value="ECO:0000314"/>
    <property type="project" value="SGD"/>
</dbReference>
<dbReference type="GO" id="GO:0042802">
    <property type="term" value="F:identical protein binding"/>
    <property type="evidence" value="ECO:0000353"/>
    <property type="project" value="IntAct"/>
</dbReference>
<dbReference type="GO" id="GO:0060090">
    <property type="term" value="F:molecular adaptor activity"/>
    <property type="evidence" value="ECO:0000315"/>
    <property type="project" value="SGD"/>
</dbReference>
<dbReference type="GO" id="GO:0043130">
    <property type="term" value="F:ubiquitin binding"/>
    <property type="evidence" value="ECO:0000314"/>
    <property type="project" value="SGD"/>
</dbReference>
<dbReference type="GO" id="GO:0006325">
    <property type="term" value="P:chromatin organization"/>
    <property type="evidence" value="ECO:0000314"/>
    <property type="project" value="SGD"/>
</dbReference>
<dbReference type="GO" id="GO:0045944">
    <property type="term" value="P:positive regulation of transcription by RNA polymerase II"/>
    <property type="evidence" value="ECO:0000314"/>
    <property type="project" value="ComplexPortal"/>
</dbReference>
<dbReference type="GO" id="GO:0006357">
    <property type="term" value="P:regulation of transcription by RNA polymerase II"/>
    <property type="evidence" value="ECO:0000314"/>
    <property type="project" value="ComplexPortal"/>
</dbReference>
<dbReference type="GO" id="GO:0006366">
    <property type="term" value="P:transcription by RNA polymerase II"/>
    <property type="evidence" value="ECO:0000314"/>
    <property type="project" value="SGD"/>
</dbReference>
<dbReference type="GO" id="GO:0006367">
    <property type="term" value="P:transcription initiation at RNA polymerase II promoter"/>
    <property type="evidence" value="ECO:0000318"/>
    <property type="project" value="GO_Central"/>
</dbReference>
<dbReference type="CDD" id="cd08044">
    <property type="entry name" value="TAF5_NTD2"/>
    <property type="match status" value="1"/>
</dbReference>
<dbReference type="CDD" id="cd00200">
    <property type="entry name" value="WD40"/>
    <property type="match status" value="1"/>
</dbReference>
<dbReference type="FunFam" id="2.130.10.10:FF:001081">
    <property type="entry name" value="TAF5-like protein"/>
    <property type="match status" value="1"/>
</dbReference>
<dbReference type="Gene3D" id="1.25.40.500">
    <property type="entry name" value="TFIID subunit TAF5, NTD2 domain"/>
    <property type="match status" value="1"/>
</dbReference>
<dbReference type="Gene3D" id="2.130.10.10">
    <property type="entry name" value="YVTN repeat-like/Quinoprotein amine dehydrogenase"/>
    <property type="match status" value="2"/>
</dbReference>
<dbReference type="InterPro" id="IPR020472">
    <property type="entry name" value="G-protein_beta_WD-40_rep"/>
</dbReference>
<dbReference type="InterPro" id="IPR006594">
    <property type="entry name" value="LisH"/>
</dbReference>
<dbReference type="InterPro" id="IPR007582">
    <property type="entry name" value="TFIID_NTD2"/>
</dbReference>
<dbReference type="InterPro" id="IPR037264">
    <property type="entry name" value="TFIID_NTD2_sf"/>
</dbReference>
<dbReference type="InterPro" id="IPR015943">
    <property type="entry name" value="WD40/YVTN_repeat-like_dom_sf"/>
</dbReference>
<dbReference type="InterPro" id="IPR019775">
    <property type="entry name" value="WD40_repeat_CS"/>
</dbReference>
<dbReference type="InterPro" id="IPR036322">
    <property type="entry name" value="WD40_repeat_dom_sf"/>
</dbReference>
<dbReference type="InterPro" id="IPR001680">
    <property type="entry name" value="WD40_rpt"/>
</dbReference>
<dbReference type="PANTHER" id="PTHR19879:SF1">
    <property type="entry name" value="CANNONBALL-RELATED"/>
    <property type="match status" value="1"/>
</dbReference>
<dbReference type="PANTHER" id="PTHR19879">
    <property type="entry name" value="TRANSCRIPTION INITIATION FACTOR TFIID"/>
    <property type="match status" value="1"/>
</dbReference>
<dbReference type="Pfam" id="PF08513">
    <property type="entry name" value="LisH"/>
    <property type="match status" value="1"/>
</dbReference>
<dbReference type="Pfam" id="PF04494">
    <property type="entry name" value="TFIID_NTD2"/>
    <property type="match status" value="1"/>
</dbReference>
<dbReference type="Pfam" id="PF00400">
    <property type="entry name" value="WD40"/>
    <property type="match status" value="6"/>
</dbReference>
<dbReference type="PRINTS" id="PR00320">
    <property type="entry name" value="GPROTEINBRPT"/>
</dbReference>
<dbReference type="SMART" id="SM00667">
    <property type="entry name" value="LisH"/>
    <property type="match status" value="1"/>
</dbReference>
<dbReference type="SMART" id="SM00320">
    <property type="entry name" value="WD40"/>
    <property type="match status" value="6"/>
</dbReference>
<dbReference type="SUPFAM" id="SSF160897">
    <property type="entry name" value="Taf5 N-terminal domain-like"/>
    <property type="match status" value="1"/>
</dbReference>
<dbReference type="SUPFAM" id="SSF50978">
    <property type="entry name" value="WD40 repeat-like"/>
    <property type="match status" value="1"/>
</dbReference>
<dbReference type="PROSITE" id="PS50896">
    <property type="entry name" value="LISH"/>
    <property type="match status" value="1"/>
</dbReference>
<dbReference type="PROSITE" id="PS00678">
    <property type="entry name" value="WD_REPEATS_1"/>
    <property type="match status" value="3"/>
</dbReference>
<dbReference type="PROSITE" id="PS50082">
    <property type="entry name" value="WD_REPEATS_2"/>
    <property type="match status" value="6"/>
</dbReference>
<dbReference type="PROSITE" id="PS50294">
    <property type="entry name" value="WD_REPEATS_REGION"/>
    <property type="match status" value="1"/>
</dbReference>
<proteinExistence type="evidence at protein level"/>
<gene>
    <name type="primary">TAF5</name>
    <name type="synonym">TAF90</name>
    <name type="ordered locus">YBR198C</name>
    <name type="ORF">YBR1410</name>
</gene>
<reference key="1">
    <citation type="journal article" date="1994" name="Yeast">
        <title>Nucleotide sequence analysis of an 11.7 kb fragment of yeast chromosome II including BEM1, a new gene of the WD-40 repeat family and a new member of the KRE2/MNT1 family.</title>
        <authorList>
            <person name="Mallet L."/>
            <person name="Bussereau F."/>
            <person name="Jacquet M."/>
        </authorList>
    </citation>
    <scope>NUCLEOTIDE SEQUENCE [GENOMIC DNA]</scope>
    <source>
        <strain>ATCC 204508 / S288c</strain>
    </source>
</reference>
<reference key="2">
    <citation type="journal article" date="1994" name="EMBO J.">
        <title>Complete DNA sequence of yeast chromosome II.</title>
        <authorList>
            <person name="Feldmann H."/>
            <person name="Aigle M."/>
            <person name="Aljinovic G."/>
            <person name="Andre B."/>
            <person name="Baclet M.C."/>
            <person name="Barthe C."/>
            <person name="Baur A."/>
            <person name="Becam A.-M."/>
            <person name="Biteau N."/>
            <person name="Boles E."/>
            <person name="Brandt T."/>
            <person name="Brendel M."/>
            <person name="Brueckner M."/>
            <person name="Bussereau F."/>
            <person name="Christiansen C."/>
            <person name="Contreras R."/>
            <person name="Crouzet M."/>
            <person name="Cziepluch C."/>
            <person name="Demolis N."/>
            <person name="Delaveau T."/>
            <person name="Doignon F."/>
            <person name="Domdey H."/>
            <person name="Duesterhus S."/>
            <person name="Dubois E."/>
            <person name="Dujon B."/>
            <person name="El Bakkoury M."/>
            <person name="Entian K.-D."/>
            <person name="Feuermann M."/>
            <person name="Fiers W."/>
            <person name="Fobo G.M."/>
            <person name="Fritz C."/>
            <person name="Gassenhuber J."/>
            <person name="Glansdorff N."/>
            <person name="Goffeau A."/>
            <person name="Grivell L.A."/>
            <person name="de Haan M."/>
            <person name="Hein C."/>
            <person name="Herbert C.J."/>
            <person name="Hollenberg C.P."/>
            <person name="Holmstroem K."/>
            <person name="Jacq C."/>
            <person name="Jacquet M."/>
            <person name="Jauniaux J.-C."/>
            <person name="Jonniaux J.-L."/>
            <person name="Kallesoee T."/>
            <person name="Kiesau P."/>
            <person name="Kirchrath L."/>
            <person name="Koetter P."/>
            <person name="Korol S."/>
            <person name="Liebl S."/>
            <person name="Logghe M."/>
            <person name="Lohan A.J.E."/>
            <person name="Louis E.J."/>
            <person name="Li Z.Y."/>
            <person name="Maat M.J."/>
            <person name="Mallet L."/>
            <person name="Mannhaupt G."/>
            <person name="Messenguy F."/>
            <person name="Miosga T."/>
            <person name="Molemans F."/>
            <person name="Mueller S."/>
            <person name="Nasr F."/>
            <person name="Obermaier B."/>
            <person name="Perea J."/>
            <person name="Pierard A."/>
            <person name="Piravandi E."/>
            <person name="Pohl F.M."/>
            <person name="Pohl T.M."/>
            <person name="Potier S."/>
            <person name="Proft M."/>
            <person name="Purnelle B."/>
            <person name="Ramezani Rad M."/>
            <person name="Rieger M."/>
            <person name="Rose M."/>
            <person name="Schaaff-Gerstenschlaeger I."/>
            <person name="Scherens B."/>
            <person name="Schwarzlose C."/>
            <person name="Skala J."/>
            <person name="Slonimski P.P."/>
            <person name="Smits P.H.M."/>
            <person name="Souciet J.-L."/>
            <person name="Steensma H.Y."/>
            <person name="Stucka R."/>
            <person name="Urrestarazu L.A."/>
            <person name="van der Aart Q.J.M."/>
            <person name="Van Dyck L."/>
            <person name="Vassarotti A."/>
            <person name="Vetter I."/>
            <person name="Vierendeels F."/>
            <person name="Vissers S."/>
            <person name="Wagner G."/>
            <person name="de Wergifosse P."/>
            <person name="Wolfe K.H."/>
            <person name="Zagulski M."/>
            <person name="Zimmermann F.K."/>
            <person name="Mewes H.-W."/>
            <person name="Kleine K."/>
        </authorList>
    </citation>
    <scope>NUCLEOTIDE SEQUENCE [LARGE SCALE GENOMIC DNA]</scope>
    <source>
        <strain>ATCC 204508 / S288c</strain>
    </source>
</reference>
<reference key="3">
    <citation type="journal article" date="2014" name="G3 (Bethesda)">
        <title>The reference genome sequence of Saccharomyces cerevisiae: Then and now.</title>
        <authorList>
            <person name="Engel S.R."/>
            <person name="Dietrich F.S."/>
            <person name="Fisk D.G."/>
            <person name="Binkley G."/>
            <person name="Balakrishnan R."/>
            <person name="Costanzo M.C."/>
            <person name="Dwight S.S."/>
            <person name="Hitz B.C."/>
            <person name="Karra K."/>
            <person name="Nash R.S."/>
            <person name="Weng S."/>
            <person name="Wong E.D."/>
            <person name="Lloyd P."/>
            <person name="Skrzypek M.S."/>
            <person name="Miyasato S.R."/>
            <person name="Simison M."/>
            <person name="Cherry J.M."/>
        </authorList>
    </citation>
    <scope>GENOME REANNOTATION</scope>
    <source>
        <strain>ATCC 204508 / S288c</strain>
    </source>
</reference>
<reference key="4">
    <citation type="journal article" date="2007" name="Genome Res.">
        <title>Approaching a complete repository of sequence-verified protein-encoding clones for Saccharomyces cerevisiae.</title>
        <authorList>
            <person name="Hu Y."/>
            <person name="Rolfs A."/>
            <person name="Bhullar B."/>
            <person name="Murthy T.V.S."/>
            <person name="Zhu C."/>
            <person name="Berger M.F."/>
            <person name="Camargo A.A."/>
            <person name="Kelley F."/>
            <person name="McCarron S."/>
            <person name="Jepson D."/>
            <person name="Richardson A."/>
            <person name="Raphael J."/>
            <person name="Moreira D."/>
            <person name="Taycher E."/>
            <person name="Zuo D."/>
            <person name="Mohr S."/>
            <person name="Kane M.F."/>
            <person name="Williamson J."/>
            <person name="Simpson A.J.G."/>
            <person name="Bulyk M.L."/>
            <person name="Harlow E."/>
            <person name="Marsischky G."/>
            <person name="Kolodner R.D."/>
            <person name="LaBaer J."/>
        </authorList>
    </citation>
    <scope>NUCLEOTIDE SEQUENCE [GENOMIC DNA]</scope>
    <source>
        <strain>ATCC 204508 / S288c</strain>
    </source>
</reference>
<reference key="5">
    <citation type="journal article" date="1994" name="Nature">
        <title>Yeast TAFIIS in a multisubunit complex required for activated transcription.</title>
        <authorList>
            <person name="Reese J.C."/>
            <person name="Apone L."/>
            <person name="Walker S.S."/>
            <person name="Griffin L.A."/>
            <person name="Green M.R."/>
        </authorList>
    </citation>
    <scope>PROTEIN SEQUENCE OF 726-747</scope>
    <scope>CHARACTERIZATION</scope>
    <source>
        <strain>Y57</strain>
    </source>
</reference>
<reference key="6">
    <citation type="journal article" date="1995" name="Proc. Natl. Acad. Sci. U.S.A.">
        <title>Identification and characterization of a TFIID-like multiprotein complex from Saccharomyces cerevisiae.</title>
        <authorList>
            <person name="Poon D."/>
            <person name="Bai Y."/>
            <person name="Campbell A.M."/>
            <person name="Bjorklund S."/>
            <person name="Kim Y.-J."/>
            <person name="Zhou S."/>
            <person name="Kornberg R.D."/>
            <person name="Weil P.A."/>
        </authorList>
    </citation>
    <scope>PROTEIN SEQUENCE OF 22-63 AND 726-752</scope>
    <scope>CHARACTERIZATION</scope>
    <source>
        <strain>ATCC 76621 / YPH252</strain>
    </source>
</reference>
<reference key="7">
    <citation type="journal article" date="1998" name="Cell">
        <title>A subset of TAF(II)s are integral components of the SAGA complex required for nucleosome acetylation and transcriptional stimulation.</title>
        <authorList>
            <person name="Grant P.A."/>
            <person name="Schieltz D."/>
            <person name="Pray-Grant M.G."/>
            <person name="Steger D.J."/>
            <person name="Reese J.C."/>
            <person name="Yates J.R. III"/>
            <person name="Workman J.L."/>
        </authorList>
    </citation>
    <scope>FUNCTION</scope>
    <scope>IDENTIFICATION IN THE IN SAGA COMPLEX</scope>
    <scope>IDENTIFICATION BY MASS SPECTROMETRY</scope>
</reference>
<reference key="8">
    <citation type="journal article" date="1999" name="J. Biol. Chem.">
        <title>Expanded lysine acetylation specificity of Gcn5 in native complexes.</title>
        <authorList>
            <person name="Grant P.A."/>
            <person name="Eberharter A."/>
            <person name="John S."/>
            <person name="Cook R.G."/>
            <person name="Turner B.M."/>
            <person name="Workman J.L."/>
        </authorList>
    </citation>
    <scope>FUNCTION IN HISTONE ACETYLATION AT THE SAGA COMPLEX</scope>
</reference>
<reference key="9">
    <citation type="journal article" date="2000" name="J. Biol. Chem.">
        <title>Identification of two novel TAF subunits of the yeast Saccharomyces cerevisiae TFIID complex.</title>
        <authorList>
            <person name="Sanders S.L."/>
            <person name="Weil P.A."/>
        </authorList>
    </citation>
    <scope>FUNCTION</scope>
    <scope>IDENTIFICATION IN TFIID COMPLEX</scope>
</reference>
<reference key="10">
    <citation type="journal article" date="2000" name="Nature">
        <title>Redundant roles for the TFIID and SAGA complexes in global transcription.</title>
        <authorList>
            <person name="Lee T.I."/>
            <person name="Causton H.C."/>
            <person name="Holstege F.C."/>
            <person name="Shen W.C."/>
            <person name="Hannett N."/>
            <person name="Jennings E.G."/>
            <person name="Winston F."/>
            <person name="Green M.R."/>
            <person name="Young R.A."/>
        </authorList>
    </citation>
    <scope>FUNCTION</scope>
</reference>
<reference key="11">
    <citation type="journal article" date="2001" name="Mol. Cell. Biol.">
        <title>Analysis of TAF90 mutants displaying allele-specific and broad defects in transcription.</title>
        <authorList>
            <person name="Durso R.J."/>
            <person name="Fisher A.K."/>
            <person name="Albright-Frey T.J."/>
            <person name="Reese J.C."/>
        </authorList>
    </citation>
    <scope>DOMAIN</scope>
</reference>
<reference key="12">
    <citation type="journal article" date="2002" name="Mol. Cell. Biol.">
        <title>Proteomics of the eukaryotic transcription machinery: identification of proteins associated with components of yeast TFIID by multidimensional mass spectrometry.</title>
        <authorList>
            <person name="Sanders S.L."/>
            <person name="Jennings J."/>
            <person name="Canutescu A."/>
            <person name="Link A.J."/>
            <person name="Weil P.A."/>
        </authorList>
    </citation>
    <scope>FUNCTION</scope>
    <scope>IDENTIFICATION IN THE IN SAGA COMPLEX</scope>
</reference>
<reference key="13">
    <citation type="journal article" date="2002" name="Mol. Cell. Biol.">
        <title>The novel SLIK histone acetyltransferase complex functions in the yeast retrograde response pathway.</title>
        <authorList>
            <person name="Pray-Grant M.G."/>
            <person name="Schieltz D."/>
            <person name="McMahon S.J."/>
            <person name="Wood J.M."/>
            <person name="Kennedy E.L."/>
            <person name="Cook R.G."/>
            <person name="Workman J.L."/>
            <person name="Yates J.R. III"/>
            <person name="Grant P.A."/>
        </authorList>
    </citation>
    <scope>IDENTIFICATION IN THE SLIK COMPLEX</scope>
</reference>
<reference key="14">
    <citation type="journal article" date="2002" name="Proc. Natl. Acad. Sci. U.S.A.">
        <title>SALSA, a variant of yeast SAGA, contains truncated Spt7, which correlates with activated transcription.</title>
        <authorList>
            <person name="Sterner D.E."/>
            <person name="Belotserkovskaya R."/>
            <person name="Berger S.L."/>
        </authorList>
    </citation>
    <scope>IDENTIFICATION IN THE SALSA COMPLEX</scope>
</reference>
<reference key="15">
    <citation type="journal article" date="2002" name="EMBO J.">
        <title>Mapping histone fold TAFs within yeast TFIID.</title>
        <authorList>
            <person name="Leurent C."/>
            <person name="Sanders S.L."/>
            <person name="Ruhlmann C."/>
            <person name="Mallouh V."/>
            <person name="Weil P.A."/>
            <person name="Kirschner D.B."/>
            <person name="Tora L."/>
            <person name="Schultz P."/>
        </authorList>
    </citation>
    <scope>3D-STRUCTURE</scope>
    <scope>ELECTRON MICROSCOPY OF TFIID</scope>
</reference>
<reference key="16">
    <citation type="journal article" date="2002" name="Mol. Cell. Biol.">
        <title>Molecular characterization of Saccharomyces cerevisiae TFIID.</title>
        <authorList>
            <person name="Sanders S.L."/>
            <person name="Garbett K.A."/>
            <person name="Weil P.A."/>
        </authorList>
    </citation>
    <scope>FUNCTION</scope>
    <scope>TFIID STOICHIOMETRY</scope>
</reference>
<reference key="17">
    <citation type="journal article" date="2002" name="Plant Mol. Biol.">
        <title>Multi-protein complexes in eukaryotic gene transcription.</title>
        <authorList>
            <person name="Martinez E."/>
        </authorList>
    </citation>
    <scope>FUNCTION</scope>
</reference>
<reference key="18">
    <citation type="journal article" date="2003" name="Genes Dev.">
        <title>SWI/SNF-dependent chromatin remodeling of RNR3 requires TAF(II)s and the general transcription machinery.</title>
        <authorList>
            <person name="Sharma V.M."/>
            <person name="Li B."/>
            <person name="Reese J.C."/>
        </authorList>
    </citation>
    <scope>FUNCTION</scope>
</reference>
<reference key="19">
    <citation type="journal article" date="2003" name="Nature">
        <title>Global analysis of protein expression in yeast.</title>
        <authorList>
            <person name="Ghaemmaghami S."/>
            <person name="Huh W.-K."/>
            <person name="Bower K."/>
            <person name="Howson R.W."/>
            <person name="Belle A."/>
            <person name="Dephoure N."/>
            <person name="O'Shea E.K."/>
            <person name="Weissman J.S."/>
        </authorList>
    </citation>
    <scope>LEVEL OF PROTEIN EXPRESSION [LARGE SCALE ANALYSIS]</scope>
</reference>
<reference key="20">
    <citation type="journal article" date="2004" name="J. Biol. Chem.">
        <title>Purification of active TFIID from Saccharomyces cerevisiae. Extensive promoter contacts and co-activator function.</title>
        <authorList>
            <person name="Auty R."/>
            <person name="Steen H."/>
            <person name="Myers L.C."/>
            <person name="Persinger J."/>
            <person name="Bartholomew B."/>
            <person name="Gygi S.P."/>
            <person name="Buratowski S."/>
        </authorList>
    </citation>
    <scope>FUNCTION IN THE TFIID COMPLEX</scope>
</reference>
<reference key="21">
    <citation type="journal article" date="2005" name="Nature">
        <title>Chd1 chromodomain links histone H3 methylation with SAGA- and SLIK-dependent acetylation.</title>
        <authorList>
            <person name="Pray-Grant M.G."/>
            <person name="Daniel J.A."/>
            <person name="Schieltz D."/>
            <person name="Yates J.R. III"/>
            <person name="Grant P.A."/>
        </authorList>
    </citation>
    <scope>IDENTIFICATION IN THE SLIK COMPLEX</scope>
</reference>
<reference key="22">
    <citation type="journal article" date="2008" name="Mol. Cell. Proteomics">
        <title>A multidimensional chromatography technology for in-depth phosphoproteome analysis.</title>
        <authorList>
            <person name="Albuquerque C.P."/>
            <person name="Smolka M.B."/>
            <person name="Payne S.H."/>
            <person name="Bafna V."/>
            <person name="Eng J."/>
            <person name="Zhou H."/>
        </authorList>
    </citation>
    <scope>PHOSPHORYLATION [LARGE SCALE ANALYSIS] AT SER-299; SER-411 AND SER-787</scope>
    <scope>IDENTIFICATION BY MASS SPECTROMETRY [LARGE SCALE ANALYSIS]</scope>
</reference>
<reference key="23">
    <citation type="journal article" date="2009" name="Science">
        <title>Global analysis of Cdk1 substrate phosphorylation sites provides insights into evolution.</title>
        <authorList>
            <person name="Holt L.J."/>
            <person name="Tuch B.B."/>
            <person name="Villen J."/>
            <person name="Johnson A.D."/>
            <person name="Gygi S.P."/>
            <person name="Morgan D.O."/>
        </authorList>
    </citation>
    <scope>PHOSPHORYLATION [LARGE SCALE ANALYSIS] AT SER-415</scope>
    <scope>IDENTIFICATION BY MASS SPECTROMETRY [LARGE SCALE ANALYSIS]</scope>
</reference>
<reference key="24">
    <citation type="journal article" date="2014" name="EMBO J.">
        <title>Architecture of the Saccharomyces cerevisiae SAGA transcription coactivator complex.</title>
        <authorList>
            <person name="Han Y."/>
            <person name="Luo J."/>
            <person name="Ranish J."/>
            <person name="Hahn S."/>
        </authorList>
    </citation>
    <scope>SUBUNIT</scope>
</reference>
<reference key="25">
    <citation type="journal article" date="2017" name="Mol. Cell">
        <title>Transcription of nearly all yeast RNA polymerase II-transcribed genes is dependent on transcription factor TFIID.</title>
        <authorList>
            <person name="Warfield L."/>
            <person name="Ramachandran S."/>
            <person name="Baptista T."/>
            <person name="Devys D."/>
            <person name="Tora L."/>
            <person name="Hahn S."/>
        </authorList>
    </citation>
    <scope>FUNCTION</scope>
</reference>
<reference key="26">
    <citation type="journal article" date="2017" name="Mol. Cell">
        <title>SAGA is a general cofactor for RNA polymerase II transcription.</title>
        <authorList>
            <person name="Baptista T."/>
            <person name="Gruenberg S."/>
            <person name="Minoungou N."/>
            <person name="Koster M.J.E."/>
            <person name="Timmers H.T.M."/>
            <person name="Hahn S."/>
            <person name="Devys D."/>
            <person name="Tora L."/>
        </authorList>
    </citation>
    <scope>FUNCTION</scope>
</reference>
<reference key="27">
    <citation type="journal article" date="2021" name="J. Biol. Chem.">
        <title>SAGA and SAGA-like SLIK transcriptional coactivators are structurally and biochemically equivalent.</title>
        <authorList>
            <person name="Adamus K."/>
            <person name="Reboul C."/>
            <person name="Voss J."/>
            <person name="Huang C."/>
            <person name="Schittenhelm R.B."/>
            <person name="Le S.N."/>
            <person name="Ellisdon A.M."/>
            <person name="Elmlund H."/>
            <person name="Boudes M."/>
            <person name="Elmlund D."/>
        </authorList>
    </citation>
    <scope>FUNCTION</scope>
    <scope>SUBUNIT</scope>
</reference>
<reference key="28">
    <citation type="journal article" date="2004" name="Mol. Cell">
        <title>Molecular architecture of the S. cerevisiae SAGA complex.</title>
        <authorList>
            <person name="Wu P.Y."/>
            <person name="Ruhlmann C."/>
            <person name="Winston F."/>
            <person name="Schultz P."/>
        </authorList>
    </citation>
    <scope>3D-STRUCTURE MODELING OF THE SAGA COMPLEX</scope>
</reference>
<reference evidence="24" key="29">
    <citation type="journal article" date="2007" name="J. Mol. Biol.">
        <title>Crystal structure, biochemical and genetic characterization of yeast and E. cuniculi TAF(II)5 N-terminal domain: implications for TFIID assembly.</title>
        <authorList>
            <person name="Romier C."/>
            <person name="James N."/>
            <person name="Birck C."/>
            <person name="Cavarelli J."/>
            <person name="Vivares C.P."/>
            <person name="Collart M.A."/>
            <person name="Moras D."/>
        </authorList>
    </citation>
    <scope>X-RAY CRYSTALLOGRAPHY (2.30 ANGSTROMS) OF 146-290</scope>
</reference>
<reference evidence="25 26" key="30">
    <citation type="journal article" date="2020" name="Nature">
        <title>Structure of the transcription coactivator SAGA.</title>
        <authorList>
            <person name="Wang H."/>
            <person name="Dienemann C."/>
            <person name="Stutzer A."/>
            <person name="Urlaub H."/>
            <person name="Cheung A.C.M."/>
            <person name="Cramer P."/>
        </authorList>
    </citation>
    <scope>STRUCTURE BY ELECTRON MICROSCOPY (3.30 ANGSTROMS) IN THE SAGA COMPLEX</scope>
</reference>
<evidence type="ECO:0000255" key="1"/>
<evidence type="ECO:0000255" key="2">
    <source>
        <dbReference type="PROSITE-ProRule" id="PRU00126"/>
    </source>
</evidence>
<evidence type="ECO:0000256" key="3">
    <source>
        <dbReference type="SAM" id="MobiDB-lite"/>
    </source>
</evidence>
<evidence type="ECO:0000269" key="4">
    <source>
    </source>
</evidence>
<evidence type="ECO:0000269" key="5">
    <source>
    </source>
</evidence>
<evidence type="ECO:0000269" key="6">
    <source>
    </source>
</evidence>
<evidence type="ECO:0000269" key="7">
    <source>
    </source>
</evidence>
<evidence type="ECO:0000269" key="8">
    <source>
    </source>
</evidence>
<evidence type="ECO:0000269" key="9">
    <source>
    </source>
</evidence>
<evidence type="ECO:0000269" key="10">
    <source>
    </source>
</evidence>
<evidence type="ECO:0000269" key="11">
    <source>
    </source>
</evidence>
<evidence type="ECO:0000269" key="12">
    <source>
    </source>
</evidence>
<evidence type="ECO:0000269" key="13">
    <source>
    </source>
</evidence>
<evidence type="ECO:0000269" key="14">
    <source>
    </source>
</evidence>
<evidence type="ECO:0000269" key="15">
    <source>
    </source>
</evidence>
<evidence type="ECO:0000269" key="16">
    <source>
    </source>
</evidence>
<evidence type="ECO:0000269" key="17">
    <source>
    </source>
</evidence>
<evidence type="ECO:0000269" key="18">
    <source>
    </source>
</evidence>
<evidence type="ECO:0000269" key="19">
    <source>
    </source>
</evidence>
<evidence type="ECO:0000269" key="20">
    <source>
    </source>
</evidence>
<evidence type="ECO:0000269" key="21">
    <source>
    </source>
</evidence>
<evidence type="ECO:0000269" key="22">
    <source>
    </source>
</evidence>
<evidence type="ECO:0000305" key="23"/>
<evidence type="ECO:0007744" key="24">
    <source>
        <dbReference type="PDB" id="2J49"/>
    </source>
</evidence>
<evidence type="ECO:0007744" key="25">
    <source>
        <dbReference type="PDB" id="6T9I"/>
    </source>
</evidence>
<evidence type="ECO:0007744" key="26">
    <source>
        <dbReference type="PDB" id="6T9K"/>
    </source>
</evidence>
<evidence type="ECO:0007744" key="27">
    <source>
    </source>
</evidence>
<evidence type="ECO:0007744" key="28">
    <source>
    </source>
</evidence>
<evidence type="ECO:0007829" key="29">
    <source>
        <dbReference type="PDB" id="2J49"/>
    </source>
</evidence>
<evidence type="ECO:0007829" key="30">
    <source>
        <dbReference type="PDB" id="6T9K"/>
    </source>
</evidence>
<name>TAF5_YEAST</name>
<accession>P38129</accession>
<accession>D6VQJ4</accession>
<organism>
    <name type="scientific">Saccharomyces cerevisiae (strain ATCC 204508 / S288c)</name>
    <name type="common">Baker's yeast</name>
    <dbReference type="NCBI Taxonomy" id="559292"/>
    <lineage>
        <taxon>Eukaryota</taxon>
        <taxon>Fungi</taxon>
        <taxon>Dikarya</taxon>
        <taxon>Ascomycota</taxon>
        <taxon>Saccharomycotina</taxon>
        <taxon>Saccharomycetes</taxon>
        <taxon>Saccharomycetales</taxon>
        <taxon>Saccharomycetaceae</taxon>
        <taxon>Saccharomyces</taxon>
    </lineage>
</organism>
<feature type="chain" id="PRO_0000051260" description="SAGA complex/transcription factor TFIID complex subunit TAF5">
    <location>
        <begin position="1"/>
        <end position="798"/>
    </location>
</feature>
<feature type="domain" description="LisH" evidence="2">
    <location>
        <begin position="56"/>
        <end position="88"/>
    </location>
</feature>
<feature type="repeat" description="WD 1" evidence="1">
    <location>
        <begin position="464"/>
        <end position="503"/>
    </location>
</feature>
<feature type="repeat" description="WD 2" evidence="1">
    <location>
        <begin position="523"/>
        <end position="562"/>
    </location>
</feature>
<feature type="repeat" description="WD 3" evidence="1">
    <location>
        <begin position="565"/>
        <end position="604"/>
    </location>
</feature>
<feature type="repeat" description="WD 4" evidence="1">
    <location>
        <begin position="607"/>
        <end position="646"/>
    </location>
</feature>
<feature type="repeat" description="WD 5" evidence="1">
    <location>
        <begin position="649"/>
        <end position="688"/>
    </location>
</feature>
<feature type="repeat" description="WD 6" evidence="1">
    <location>
        <begin position="692"/>
        <end position="731"/>
    </location>
</feature>
<feature type="region of interest" description="Disordered" evidence="3">
    <location>
        <begin position="1"/>
        <end position="57"/>
    </location>
</feature>
<feature type="region of interest" description="Disordered" evidence="3">
    <location>
        <begin position="82"/>
        <end position="134"/>
    </location>
</feature>
<feature type="region of interest" description="Disordered" evidence="3">
    <location>
        <begin position="371"/>
        <end position="421"/>
    </location>
</feature>
<feature type="coiled-coil region" evidence="1">
    <location>
        <begin position="329"/>
        <end position="349"/>
    </location>
</feature>
<feature type="compositionally biased region" description="Polar residues" evidence="3">
    <location>
        <begin position="1"/>
        <end position="25"/>
    </location>
</feature>
<feature type="compositionally biased region" description="Low complexity" evidence="3">
    <location>
        <begin position="26"/>
        <end position="53"/>
    </location>
</feature>
<feature type="compositionally biased region" description="Polar residues" evidence="3">
    <location>
        <begin position="86"/>
        <end position="110"/>
    </location>
</feature>
<feature type="compositionally biased region" description="Basic and acidic residues" evidence="3">
    <location>
        <begin position="371"/>
        <end position="411"/>
    </location>
</feature>
<feature type="modified residue" description="Phosphoserine" evidence="27">
    <location>
        <position position="299"/>
    </location>
</feature>
<feature type="modified residue" description="Phosphoserine" evidence="27">
    <location>
        <position position="411"/>
    </location>
</feature>
<feature type="modified residue" description="Phosphoserine" evidence="28">
    <location>
        <position position="415"/>
    </location>
</feature>
<feature type="modified residue" description="Phosphoserine" evidence="27">
    <location>
        <position position="787"/>
    </location>
</feature>
<feature type="helix" evidence="30">
    <location>
        <begin position="57"/>
        <end position="70"/>
    </location>
</feature>
<feature type="helix" evidence="30">
    <location>
        <begin position="75"/>
        <end position="86"/>
    </location>
</feature>
<feature type="turn" evidence="30">
    <location>
        <begin position="99"/>
        <end position="101"/>
    </location>
</feature>
<feature type="strand" evidence="30">
    <location>
        <begin position="120"/>
        <end position="123"/>
    </location>
</feature>
<feature type="helix" evidence="29">
    <location>
        <begin position="152"/>
        <end position="164"/>
    </location>
</feature>
<feature type="turn" evidence="29">
    <location>
        <begin position="168"/>
        <end position="170"/>
    </location>
</feature>
<feature type="helix" evidence="29">
    <location>
        <begin position="171"/>
        <end position="192"/>
    </location>
</feature>
<feature type="helix" evidence="29">
    <location>
        <begin position="194"/>
        <end position="204"/>
    </location>
</feature>
<feature type="helix" evidence="29">
    <location>
        <begin position="205"/>
        <end position="208"/>
    </location>
</feature>
<feature type="helix" evidence="29">
    <location>
        <begin position="209"/>
        <end position="217"/>
    </location>
</feature>
<feature type="turn" evidence="29">
    <location>
        <begin position="218"/>
        <end position="221"/>
    </location>
</feature>
<feature type="helix" evidence="29">
    <location>
        <begin position="225"/>
        <end position="230"/>
    </location>
</feature>
<feature type="helix" evidence="29">
    <location>
        <begin position="232"/>
        <end position="238"/>
    </location>
</feature>
<feature type="strand" evidence="29">
    <location>
        <begin position="242"/>
        <end position="246"/>
    </location>
</feature>
<feature type="helix" evidence="29">
    <location>
        <begin position="248"/>
        <end position="260"/>
    </location>
</feature>
<feature type="helix" evidence="29">
    <location>
        <begin position="262"/>
        <end position="264"/>
    </location>
</feature>
<feature type="helix" evidence="29">
    <location>
        <begin position="266"/>
        <end position="276"/>
    </location>
</feature>
<feature type="strand" evidence="29">
    <location>
        <begin position="277"/>
        <end position="281"/>
    </location>
</feature>
<feature type="helix" evidence="30">
    <location>
        <begin position="432"/>
        <end position="443"/>
    </location>
</feature>
<feature type="strand" evidence="30">
    <location>
        <begin position="456"/>
        <end position="462"/>
    </location>
</feature>
<feature type="strand" evidence="30">
    <location>
        <begin position="469"/>
        <end position="474"/>
    </location>
</feature>
<feature type="strand" evidence="30">
    <location>
        <begin position="476"/>
        <end position="478"/>
    </location>
</feature>
<feature type="strand" evidence="30">
    <location>
        <begin position="480"/>
        <end position="485"/>
    </location>
</feature>
<feature type="strand" evidence="30">
    <location>
        <begin position="490"/>
        <end position="494"/>
    </location>
</feature>
<feature type="turn" evidence="30">
    <location>
        <begin position="504"/>
        <end position="506"/>
    </location>
</feature>
<feature type="strand" evidence="30">
    <location>
        <begin position="517"/>
        <end position="521"/>
    </location>
</feature>
<feature type="strand" evidence="30">
    <location>
        <begin position="528"/>
        <end position="533"/>
    </location>
</feature>
<feature type="strand" evidence="30">
    <location>
        <begin position="537"/>
        <end position="547"/>
    </location>
</feature>
<feature type="strand" evidence="30">
    <location>
        <begin position="549"/>
        <end position="553"/>
    </location>
</feature>
<feature type="turn" evidence="30">
    <location>
        <begin position="554"/>
        <end position="556"/>
    </location>
</feature>
<feature type="strand" evidence="30">
    <location>
        <begin position="558"/>
        <end position="563"/>
    </location>
</feature>
<feature type="strand" evidence="30">
    <location>
        <begin position="570"/>
        <end position="574"/>
    </location>
</feature>
<feature type="strand" evidence="30">
    <location>
        <begin position="577"/>
        <end position="580"/>
    </location>
</feature>
<feature type="strand" evidence="30">
    <location>
        <begin position="583"/>
        <end position="586"/>
    </location>
</feature>
<feature type="strand" evidence="30">
    <location>
        <begin position="589"/>
        <end position="595"/>
    </location>
</feature>
<feature type="strand" evidence="30">
    <location>
        <begin position="598"/>
        <end position="606"/>
    </location>
</feature>
<feature type="strand" evidence="30">
    <location>
        <begin position="612"/>
        <end position="617"/>
    </location>
</feature>
<feature type="strand" evidence="30">
    <location>
        <begin position="621"/>
        <end position="628"/>
    </location>
</feature>
<feature type="turn" evidence="30">
    <location>
        <begin position="629"/>
        <end position="631"/>
    </location>
</feature>
<feature type="strand" evidence="30">
    <location>
        <begin position="632"/>
        <end position="637"/>
    </location>
</feature>
<feature type="turn" evidence="30">
    <location>
        <begin position="638"/>
        <end position="640"/>
    </location>
</feature>
<feature type="strand" evidence="30">
    <location>
        <begin position="643"/>
        <end position="648"/>
    </location>
</feature>
<feature type="strand" evidence="30">
    <location>
        <begin position="654"/>
        <end position="659"/>
    </location>
</feature>
<feature type="strand" evidence="30">
    <location>
        <begin position="661"/>
        <end position="670"/>
    </location>
</feature>
<feature type="strand" evidence="30">
    <location>
        <begin position="675"/>
        <end position="679"/>
    </location>
</feature>
<feature type="turn" evidence="30">
    <location>
        <begin position="680"/>
        <end position="682"/>
    </location>
</feature>
<feature type="strand" evidence="30">
    <location>
        <begin position="684"/>
        <end position="689"/>
    </location>
</feature>
<feature type="strand" evidence="30">
    <location>
        <begin position="704"/>
        <end position="706"/>
    </location>
</feature>
<feature type="strand" evidence="30">
    <location>
        <begin position="708"/>
        <end position="712"/>
    </location>
</feature>
<feature type="strand" evidence="30">
    <location>
        <begin position="714"/>
        <end position="728"/>
    </location>
</feature>
<feature type="turn" evidence="30">
    <location>
        <begin position="747"/>
        <end position="749"/>
    </location>
</feature>
<feature type="strand" evidence="30">
    <location>
        <begin position="768"/>
        <end position="773"/>
    </location>
</feature>
<feature type="strand" evidence="30">
    <location>
        <begin position="781"/>
        <end position="784"/>
    </location>
</feature>
<feature type="strand" evidence="30">
    <location>
        <begin position="788"/>
        <end position="795"/>
    </location>
</feature>
<keyword id="KW-0002">3D-structure</keyword>
<keyword id="KW-0175">Coiled coil</keyword>
<keyword id="KW-0903">Direct protein sequencing</keyword>
<keyword id="KW-0539">Nucleus</keyword>
<keyword id="KW-0597">Phosphoprotein</keyword>
<keyword id="KW-1185">Reference proteome</keyword>
<keyword id="KW-0677">Repeat</keyword>
<keyword id="KW-0804">Transcription</keyword>
<keyword id="KW-0805">Transcription regulation</keyword>
<keyword id="KW-0853">WD repeat</keyword>
<comment type="function">
    <text evidence="4 5 6 8 10 11 12 13 15 17 18 19 20 21 22">Functions as a component of both the DNA-binding general transcription initiation factor complex TFIID and the transcription coactivator SAGA complex (PubMed:10788514, PubMed:12052880, PubMed:25216679, PubMed:28918900). Binding of TFIID to a promoter (with or without TATA element) is the initial step in pre-initiation complex (PIC) formation. TFIID plays a key role in the regulation of gene expression by RNA polymerase II through different activities such as transcription activator interaction, core promoter recognition and selectivity, TFIIA and TFIIB interaction, chromatin modification (histone acetylation by TAF1), facilitation of DNA opening and initiation of transcription (PubMed:12516863, PubMed:12600943, PubMed:15448131, PubMed:28918900). SAGA acts as a general cofactor required for essentially all RNA polymerase II transcription (PubMed:10864329, PubMed:25216679, PubMed:9674426). At the promoters, SAGA is required for transcription pre-initiation complex (PIC) recruitment. It influences RNA polymerase II transcriptional activity through different activities such as TBP interaction (via core/TAF module) and promoter selectivity, interaction with transcription activators (via Tra1/SPT module), and chromatin modification through histone acetylation (via HAT module) and deubiquitination (via DUB module) (PubMed:31969703). SAGA preferentially acetylates histones H3 (to form H3K9ac, H3K14ac, H3K18ac and H3K23ac) and H2B and deubiquitinates histone H2B (PubMed:10026213). SAGA interacts with DNA via upstream activating sequences (UASs) (PubMed:28918903). Also identified in a modified version of SAGA named SALSA or SLIK (PubMed:12186975, PubMed:12446794). The cleavage of SPT7 and the absence of the SPT8 subunit in SLIK neither drive any major conformational differences in its structure compared with SAGA, nor significantly affect HAT, DUB, or DNA-binding activities (PubMed:33864814).</text>
</comment>
<comment type="subunit">
    <text evidence="5 8 9 10 11 15 16 17 20 21 22">Component of the 1.8 MDa SAGA (Spt-Ada-Gcn5 acetyltransferase) complex, which is composed of 19 subunits TRA1, SPT7, TAF5, NGG1/ADA3, SGF73, SPT20/ADA5, SPT8, TAF12, TAF6, HFI1/ADA1, UBP8, GCN5, ADA2, SPT3, SGF29, TAF10, TAF9, SGF11 and SUS1 (PubMed:12052880, PubMed:31969703, PubMed:9674426). The SAGA complex is composed of 4 modules, namely the HAT (histone acetyltransferase) module (GCN5, ADA2, NGG1/ADA3 and SGF29), the DUB (deubiquitinating) module (UBP8, SGF11, SGF73 and SUS1), the core or TAF (TBP-associated factor) module (TAF5, TAF6, TAF9, TAF10 and TAF12), and the Tra1 or SPT (Suppressor of Ty) module (TRA1, HFI1/ADA1, SPT3, SPT7, SPT8 and SPT20/ADA5). The Tra1/SPT module binds activators, the core module recruits TBP (TATA-binding protein), the HAT module contains the histone H3 acetyltransferase GCN5, and the DUB module comprises the histone H2B deubiquitinase UBP8 (PubMed:25216679, PubMed:31969703). Also identified in an altered form of SAGA, named SALSA (SAGA altered, Spt8 absent) or SLIK (SAGA-like) complex, which contains a C-terminal truncated form of SPT7 and is missing SPT8 (PubMed:12186975, PubMed:12446794, PubMed:15647753). However, it has been shown that the SAGA and SAGA-like SALSA/SLIK transcriptional coactivators are structurally and biochemically equivalent (PubMed:33864814). Component of the 1.2 MDa TFIID complex, which is composed of TATA-binding protein (TBP) and the 14 TBP-associated factors (TAFs). It comprises 1 copy of each TAF1, TAF2, TAF3, TAF7, TAF8, TAF11, TAF13, 2 copies of each TAF4, TAF5, TAF6, TAF9, TAF10, TAF12, and 3 copies of TAF14 (PubMed:10788514, PubMed:12138208, PubMed:15448131).</text>
</comment>
<comment type="interaction">
    <interactant intactId="EBI-18868">
        <id>P38129</id>
    </interactant>
    <interactant intactId="EBI-8287">
        <id>Q12060</id>
        <label>HFI1</label>
    </interactant>
    <organismsDiffer>false</organismsDiffer>
    <experiments>16</experiments>
</comment>
<comment type="interaction">
    <interactant intactId="EBI-18868">
        <id>P38129</id>
    </interactant>
    <interactant intactId="EBI-18862">
        <id>P23255</id>
        <label>TAF2</label>
    </interactant>
    <organismsDiffer>false</organismsDiffer>
    <experiments>10</experiments>
</comment>
<comment type="interaction">
    <interactant intactId="EBI-18868">
        <id>P38129</id>
    </interactant>
    <interactant intactId="EBI-11231">
        <id>P50105</id>
        <label>TAF4</label>
    </interactant>
    <organismsDiffer>false</organismsDiffer>
    <experiments>13</experiments>
</comment>
<comment type="interaction">
    <interactant intactId="EBI-18868">
        <id>P38129</id>
    </interactant>
    <interactant intactId="EBI-18868">
        <id>P38129</id>
        <label>TAF5</label>
    </interactant>
    <organismsDiffer>false</organismsDiffer>
    <experiments>8</experiments>
</comment>
<comment type="interaction">
    <interactant intactId="EBI-18868">
        <id>P38129</id>
    </interactant>
    <interactant intactId="EBI-18876">
        <id>P53040</id>
        <label>TAF6</label>
    </interactant>
    <organismsDiffer>false</organismsDiffer>
    <experiments>13</experiments>
</comment>
<comment type="subcellular location">
    <subcellularLocation>
        <location evidence="23">Nucleus</location>
    </subcellularLocation>
</comment>
<comment type="domain">
    <text evidence="7">The C-terminal WD40 motifs are required for its incorporation into TFIID and function in SAGA.</text>
</comment>
<comment type="miscellaneous">
    <text evidence="14">Present with 14834 (+/-203) molecules/cell in log phase SD medium.</text>
</comment>
<comment type="similarity">
    <text evidence="23">Belongs to the WD repeat TAF5 family.</text>
</comment>
<protein>
    <recommendedName>
        <fullName>SAGA complex/transcription factor TFIID complex subunit TAF5</fullName>
    </recommendedName>
    <alternativeName>
        <fullName>TAFII-90</fullName>
    </alternativeName>
    <alternativeName>
        <fullName>TBP-associated factor 5</fullName>
    </alternativeName>
    <alternativeName>
        <fullName>TBP-associated factor 90 kDa</fullName>
    </alternativeName>
    <alternativeName>
        <fullName>Transcription initiation factor TFIID subunit 5</fullName>
    </alternativeName>
</protein>